<feature type="chain" id="PRO_0000143582" description="Maturase K">
    <location>
        <begin position="1"/>
        <end position="507"/>
    </location>
</feature>
<protein>
    <recommendedName>
        <fullName evidence="1">Maturase K</fullName>
    </recommendedName>
    <alternativeName>
        <fullName evidence="1">Intron maturase</fullName>
    </alternativeName>
</protein>
<reference key="1">
    <citation type="journal article" date="2000" name="Syst. Bot.">
        <title>Toward a phylogenetic classification of the Lauraceae: evidence from matK sequences.</title>
        <authorList>
            <person name="Rohwer J.G."/>
        </authorList>
        <dbReference type="AGRICOLA" id="IND22043295"/>
    </citation>
    <scope>NUCLEOTIDE SEQUENCE [GENOMIC DNA]</scope>
    <source>
        <tissue>Leaf</tissue>
    </source>
</reference>
<reference key="2">
    <citation type="submission" date="2005-03" db="EMBL/GenBank/DDBJ databases">
        <authorList>
            <person name="Rohwer J.G."/>
        </authorList>
    </citation>
    <scope>SEQUENCE REVISION</scope>
</reference>
<proteinExistence type="inferred from homology"/>
<keyword id="KW-0150">Chloroplast</keyword>
<keyword id="KW-0507">mRNA processing</keyword>
<keyword id="KW-0934">Plastid</keyword>
<keyword id="KW-0694">RNA-binding</keyword>
<keyword id="KW-0819">tRNA processing</keyword>
<gene>
    <name evidence="1" type="primary">matK</name>
</gene>
<sequence>MEELQGYLEMDGFRQQYFLYPFLFQEYIYALAHGHALNGSILYEPVENLDHDNKSSSLIVKRLITRMHQQNRLIISVNDSNQNRFVGHNNHFDSQMISEGFAVVVEIPFSLRLVSSLEEKEIAKSHNLRSIHSIFPFFEDKLSHLNHVSDILIPHPIHLEILVQTLHSWIQDTPSLHLLRLSLYEYWNSNSLITSKNSISLFSKENQRFFLFLSNSHVYECEFIFIFLRKQPFHLRSKSFGSFLERTHFYAKIEYLVVVLCNDFQKTLGLFKDPFMHYVRYQGKSILASRGAHLLIKKWKSHLVNFWQCHFDLWSQPARIHIKQLYNHPFYFLGYLSSVRLNSSVIRSQMLENSFRIDTAIKKFETVVPIIPLIGSLAKAKFCNVSGHPISKPFRADLSDSEILNRFGRICRNLSHYHSGSSKKQSLYRIKYILRLSCARTLSRKHKSTIRAFLKRLGSEFLEEFFTEEEQALSLIFPTTSSPSHRSHRERIWYLDIIRINDLVSHL</sequence>
<accession>Q9GHR6</accession>
<name>MATK_PERAE</name>
<comment type="function">
    <text evidence="1">Usually encoded in the trnK tRNA gene intron. Probably assists in splicing its own and other chloroplast group II introns.</text>
</comment>
<comment type="subcellular location">
    <subcellularLocation>
        <location>Plastid</location>
        <location>Chloroplast</location>
    </subcellularLocation>
</comment>
<comment type="similarity">
    <text evidence="1">Belongs to the intron maturase 2 family. MatK subfamily.</text>
</comment>
<evidence type="ECO:0000255" key="1">
    <source>
        <dbReference type="HAMAP-Rule" id="MF_01390"/>
    </source>
</evidence>
<organism>
    <name type="scientific">Persea americana</name>
    <name type="common">Avocado</name>
    <dbReference type="NCBI Taxonomy" id="3435"/>
    <lineage>
        <taxon>Eukaryota</taxon>
        <taxon>Viridiplantae</taxon>
        <taxon>Streptophyta</taxon>
        <taxon>Embryophyta</taxon>
        <taxon>Tracheophyta</taxon>
        <taxon>Spermatophyta</taxon>
        <taxon>Magnoliopsida</taxon>
        <taxon>Magnoliidae</taxon>
        <taxon>Laurales</taxon>
        <taxon>Lauraceae</taxon>
        <taxon>Persea</taxon>
    </lineage>
</organism>
<geneLocation type="chloroplast"/>
<dbReference type="EMBL" id="AJ247179">
    <property type="protein sequence ID" value="CAC05386.2"/>
    <property type="molecule type" value="Genomic_DNA"/>
</dbReference>
<dbReference type="RefSeq" id="YP_009298521.1">
    <property type="nucleotide sequence ID" value="NC_031189.1"/>
</dbReference>
<dbReference type="GeneID" id="29075245"/>
<dbReference type="GO" id="GO:0009507">
    <property type="term" value="C:chloroplast"/>
    <property type="evidence" value="ECO:0007669"/>
    <property type="project" value="UniProtKB-SubCell"/>
</dbReference>
<dbReference type="GO" id="GO:0003723">
    <property type="term" value="F:RNA binding"/>
    <property type="evidence" value="ECO:0007669"/>
    <property type="project" value="UniProtKB-KW"/>
</dbReference>
<dbReference type="GO" id="GO:0006397">
    <property type="term" value="P:mRNA processing"/>
    <property type="evidence" value="ECO:0007669"/>
    <property type="project" value="UniProtKB-KW"/>
</dbReference>
<dbReference type="GO" id="GO:0008380">
    <property type="term" value="P:RNA splicing"/>
    <property type="evidence" value="ECO:0007669"/>
    <property type="project" value="UniProtKB-UniRule"/>
</dbReference>
<dbReference type="GO" id="GO:0008033">
    <property type="term" value="P:tRNA processing"/>
    <property type="evidence" value="ECO:0007669"/>
    <property type="project" value="UniProtKB-KW"/>
</dbReference>
<dbReference type="HAMAP" id="MF_01390">
    <property type="entry name" value="MatK"/>
    <property type="match status" value="1"/>
</dbReference>
<dbReference type="InterPro" id="IPR024937">
    <property type="entry name" value="Domain_X"/>
</dbReference>
<dbReference type="InterPro" id="IPR002866">
    <property type="entry name" value="Maturase_MatK"/>
</dbReference>
<dbReference type="InterPro" id="IPR024942">
    <property type="entry name" value="Maturase_MatK_N"/>
</dbReference>
<dbReference type="PANTHER" id="PTHR34811">
    <property type="entry name" value="MATURASE K"/>
    <property type="match status" value="1"/>
</dbReference>
<dbReference type="PANTHER" id="PTHR34811:SF1">
    <property type="entry name" value="MATURASE K"/>
    <property type="match status" value="1"/>
</dbReference>
<dbReference type="Pfam" id="PF01348">
    <property type="entry name" value="Intron_maturas2"/>
    <property type="match status" value="1"/>
</dbReference>
<dbReference type="Pfam" id="PF01824">
    <property type="entry name" value="MatK_N"/>
    <property type="match status" value="1"/>
</dbReference>